<evidence type="ECO:0000255" key="1">
    <source>
        <dbReference type="HAMAP-Rule" id="MF_00441"/>
    </source>
</evidence>
<evidence type="ECO:0000305" key="2"/>
<sequence length="53" mass="6073">MFYTNVETLLNTNCFALLPEAYAPFDPLVDVLPIIPLLFLLLAFVWQAAVKFR</sequence>
<dbReference type="EMBL" id="AF241277">
    <property type="protein sequence ID" value="AAF82442.1"/>
    <property type="molecule type" value="Genomic_DNA"/>
</dbReference>
<dbReference type="RefSeq" id="YP_009144878.1">
    <property type="nucleotide sequence ID" value="NC_027269.1"/>
</dbReference>
<dbReference type="SMR" id="Q9MS76"/>
<dbReference type="GeneID" id="24573196"/>
<dbReference type="GO" id="GO:0009535">
    <property type="term" value="C:chloroplast thylakoid membrane"/>
    <property type="evidence" value="ECO:0007669"/>
    <property type="project" value="UniProtKB-SubCell"/>
</dbReference>
<dbReference type="GO" id="GO:0009539">
    <property type="term" value="C:photosystem II reaction center"/>
    <property type="evidence" value="ECO:0007669"/>
    <property type="project" value="InterPro"/>
</dbReference>
<dbReference type="GO" id="GO:0015979">
    <property type="term" value="P:photosynthesis"/>
    <property type="evidence" value="ECO:0007669"/>
    <property type="project" value="UniProtKB-UniRule"/>
</dbReference>
<dbReference type="HAMAP" id="MF_00441">
    <property type="entry name" value="PSII_PsbK"/>
    <property type="match status" value="1"/>
</dbReference>
<dbReference type="InterPro" id="IPR003687">
    <property type="entry name" value="PSII_PsbK"/>
</dbReference>
<dbReference type="InterPro" id="IPR037270">
    <property type="entry name" value="PSII_PsbK_sf"/>
</dbReference>
<dbReference type="NCBIfam" id="NF002715">
    <property type="entry name" value="PRK02553.1"/>
    <property type="match status" value="1"/>
</dbReference>
<dbReference type="PANTHER" id="PTHR35325">
    <property type="match status" value="1"/>
</dbReference>
<dbReference type="PANTHER" id="PTHR35325:SF1">
    <property type="entry name" value="PHOTOSYSTEM II REACTION CENTER PROTEIN K"/>
    <property type="match status" value="1"/>
</dbReference>
<dbReference type="Pfam" id="PF02533">
    <property type="entry name" value="PsbK"/>
    <property type="match status" value="1"/>
</dbReference>
<dbReference type="SUPFAM" id="SSF161037">
    <property type="entry name" value="Photosystem II reaction center protein K, PsbK"/>
    <property type="match status" value="1"/>
</dbReference>
<organism>
    <name type="scientific">Euglena anabaena</name>
    <name type="common">Euglenaria anabaena</name>
    <dbReference type="NCBI Taxonomy" id="38273"/>
    <lineage>
        <taxon>Eukaryota</taxon>
        <taxon>Discoba</taxon>
        <taxon>Euglenozoa</taxon>
        <taxon>Euglenida</taxon>
        <taxon>Spirocuta</taxon>
        <taxon>Euglenophyceae</taxon>
        <taxon>Euglenales</taxon>
        <taxon>Euglenaceae</taxon>
        <taxon>Euglenaria</taxon>
    </lineage>
</organism>
<gene>
    <name evidence="1" type="primary">psbK</name>
</gene>
<accession>Q9MS76</accession>
<proteinExistence type="inferred from homology"/>
<geneLocation type="chloroplast"/>
<keyword id="KW-0150">Chloroplast</keyword>
<keyword id="KW-0472">Membrane</keyword>
<keyword id="KW-0602">Photosynthesis</keyword>
<keyword id="KW-0604">Photosystem II</keyword>
<keyword id="KW-0934">Plastid</keyword>
<keyword id="KW-0674">Reaction center</keyword>
<keyword id="KW-0793">Thylakoid</keyword>
<keyword id="KW-0812">Transmembrane</keyword>
<keyword id="KW-1133">Transmembrane helix</keyword>
<feature type="propeptide" id="PRO_0000029455" evidence="1">
    <location>
        <begin position="1"/>
        <end position="16"/>
    </location>
</feature>
<feature type="chain" id="PRO_0000029456" description="Photosystem II reaction center protein K" evidence="1">
    <location>
        <begin position="17"/>
        <end position="53"/>
    </location>
</feature>
<feature type="transmembrane region" description="Helical" evidence="1">
    <location>
        <begin position="28"/>
        <end position="48"/>
    </location>
</feature>
<protein>
    <recommendedName>
        <fullName evidence="1">Photosystem II reaction center protein K</fullName>
        <shortName evidence="1">PSII-K</shortName>
    </recommendedName>
</protein>
<reference key="1">
    <citation type="journal article" date="2001" name="Mol. Gen. Genet.">
        <title>Comparison of psbK operon organization and group III intron content in chloroplast genomes of 12 Euglenoid species.</title>
        <authorList>
            <person name="Doetsch N.A."/>
            <person name="Thompson M.D."/>
            <person name="Favreau M.R."/>
            <person name="Hallick R.B."/>
        </authorList>
    </citation>
    <scope>NUCLEOTIDE SEQUENCE [GENOMIC DNA]</scope>
</reference>
<name>PSBK_EUGAN</name>
<comment type="function">
    <text evidence="1">One of the components of the core complex of photosystem II (PSII). PSII is a light-driven water:plastoquinone oxidoreductase that uses light energy to abstract electrons from H(2)O, generating O(2) and a proton gradient subsequently used for ATP formation. It consists of a core antenna complex that captures photons, and an electron transfer chain that converts photonic excitation into a charge separation.</text>
</comment>
<comment type="subunit">
    <text evidence="2">PSII is composed of 1 copy each of membrane proteins PsbA, PsbB, PsbC, PsbD, PsbE, PsbF, PsbH, PsbI, PsbJ, PsbK, PsbL, PsbM, PsbT, PsbY, PsbZ, Psb30/Ycf12, at least 3 peripheral proteins of the oxygen-evolving complex and a large number of cofactors. It forms dimeric complexes.</text>
</comment>
<comment type="subcellular location">
    <subcellularLocation>
        <location evidence="1">Plastid</location>
        <location evidence="1">Chloroplast thylakoid membrane</location>
        <topology evidence="1">Single-pass membrane protein</topology>
    </subcellularLocation>
</comment>
<comment type="similarity">
    <text evidence="1">Belongs to the PsbK family.</text>
</comment>